<proteinExistence type="inferred from homology"/>
<feature type="chain" id="PRO_0000360222" description="NAD(P)H-quinone oxidoreductase subunit 6, chloroplastic">
    <location>
        <begin position="1"/>
        <end position="177"/>
    </location>
</feature>
<feature type="transmembrane region" description="Helical" evidence="2">
    <location>
        <begin position="10"/>
        <end position="30"/>
    </location>
</feature>
<feature type="transmembrane region" description="Helical" evidence="2">
    <location>
        <begin position="32"/>
        <end position="52"/>
    </location>
</feature>
<feature type="transmembrane region" description="Helical" evidence="2">
    <location>
        <begin position="61"/>
        <end position="81"/>
    </location>
</feature>
<feature type="transmembrane region" description="Helical" evidence="2">
    <location>
        <begin position="90"/>
        <end position="112"/>
    </location>
</feature>
<feature type="transmembrane region" description="Helical" evidence="2">
    <location>
        <begin position="152"/>
        <end position="172"/>
    </location>
</feature>
<dbReference type="EC" id="7.1.1.-"/>
<dbReference type="EMBL" id="AJ879453">
    <property type="protein sequence ID" value="CAI53847.1"/>
    <property type="molecule type" value="Genomic_DNA"/>
</dbReference>
<dbReference type="RefSeq" id="YP_319816.1">
    <property type="nucleotide sequence ID" value="NC_007407.1"/>
</dbReference>
<dbReference type="SMR" id="Q3V4Y1"/>
<dbReference type="GeneID" id="3677484"/>
<dbReference type="GO" id="GO:0009535">
    <property type="term" value="C:chloroplast thylakoid membrane"/>
    <property type="evidence" value="ECO:0007669"/>
    <property type="project" value="UniProtKB-SubCell"/>
</dbReference>
<dbReference type="GO" id="GO:0008137">
    <property type="term" value="F:NADH dehydrogenase (ubiquinone) activity"/>
    <property type="evidence" value="ECO:0007669"/>
    <property type="project" value="InterPro"/>
</dbReference>
<dbReference type="GO" id="GO:0048038">
    <property type="term" value="F:quinone binding"/>
    <property type="evidence" value="ECO:0007669"/>
    <property type="project" value="UniProtKB-KW"/>
</dbReference>
<dbReference type="FunFam" id="1.20.120.1200:FF:000002">
    <property type="entry name" value="NAD(P)H-quinone oxidoreductase subunit 6, chloroplastic"/>
    <property type="match status" value="1"/>
</dbReference>
<dbReference type="Gene3D" id="1.20.120.1200">
    <property type="entry name" value="NADH-ubiquinone/plastoquinone oxidoreductase chain 6, subunit NuoJ"/>
    <property type="match status" value="1"/>
</dbReference>
<dbReference type="InterPro" id="IPR050290">
    <property type="entry name" value="NAD(P)H-Q_Oxidoreduct_6"/>
</dbReference>
<dbReference type="InterPro" id="IPR001457">
    <property type="entry name" value="NADH_UbQ/plastoQ_OxRdtase_su6"/>
</dbReference>
<dbReference type="InterPro" id="IPR042106">
    <property type="entry name" value="Nuo/plastoQ_OxRdtase_6_NuoJ"/>
</dbReference>
<dbReference type="PANTHER" id="PTHR48479">
    <property type="entry name" value="NAD(P)H-QUINONE OXIDOREDUCTASE SUBUNIT 6, CHLOROPLASTIC"/>
    <property type="match status" value="1"/>
</dbReference>
<dbReference type="PANTHER" id="PTHR48479:SF1">
    <property type="entry name" value="NAD(P)H-QUINONE OXIDOREDUCTASE SUBUNIT 6, CHLOROPLASTIC"/>
    <property type="match status" value="1"/>
</dbReference>
<dbReference type="Pfam" id="PF00499">
    <property type="entry name" value="Oxidored_q3"/>
    <property type="match status" value="1"/>
</dbReference>
<reference key="1">
    <citation type="journal article" date="2005" name="Mol. Biol. Evol.">
        <title>Analysis of Acorus calamus chloroplast genome and its phylogenetic implications.</title>
        <authorList>
            <person name="Goremykin V.V."/>
            <person name="Holland B."/>
            <person name="Hirsch-Ernst K.I."/>
            <person name="Hellwig F.H."/>
        </authorList>
    </citation>
    <scope>NUCLEOTIDE SEQUENCE [LARGE SCALE GENOMIC DNA]</scope>
</reference>
<geneLocation type="chloroplast"/>
<name>NU6C_ACOCL</name>
<organism>
    <name type="scientific">Acorus calamus</name>
    <name type="common">Sweet flag</name>
    <dbReference type="NCBI Taxonomy" id="4465"/>
    <lineage>
        <taxon>Eukaryota</taxon>
        <taxon>Viridiplantae</taxon>
        <taxon>Streptophyta</taxon>
        <taxon>Embryophyta</taxon>
        <taxon>Tracheophyta</taxon>
        <taxon>Spermatophyta</taxon>
        <taxon>Magnoliopsida</taxon>
        <taxon>Liliopsida</taxon>
        <taxon>Acoraceae</taxon>
        <taxon>Acorus</taxon>
    </lineage>
</organism>
<evidence type="ECO:0000250" key="1"/>
<evidence type="ECO:0000255" key="2"/>
<evidence type="ECO:0000305" key="3"/>
<gene>
    <name type="primary">ndhG</name>
</gene>
<comment type="function">
    <text evidence="1">NDH shuttles electrons from NAD(P)H:plastoquinone, via FMN and iron-sulfur (Fe-S) centers, to quinones in the photosynthetic chain and possibly in a chloroplast respiratory chain. The immediate electron acceptor for the enzyme in this species is believed to be plastoquinone. Couples the redox reaction to proton translocation, and thus conserves the redox energy in a proton gradient (By similarity).</text>
</comment>
<comment type="catalytic activity">
    <reaction>
        <text>a plastoquinone + NADH + (n+1) H(+)(in) = a plastoquinol + NAD(+) + n H(+)(out)</text>
        <dbReference type="Rhea" id="RHEA:42608"/>
        <dbReference type="Rhea" id="RHEA-COMP:9561"/>
        <dbReference type="Rhea" id="RHEA-COMP:9562"/>
        <dbReference type="ChEBI" id="CHEBI:15378"/>
        <dbReference type="ChEBI" id="CHEBI:17757"/>
        <dbReference type="ChEBI" id="CHEBI:57540"/>
        <dbReference type="ChEBI" id="CHEBI:57945"/>
        <dbReference type="ChEBI" id="CHEBI:62192"/>
    </reaction>
</comment>
<comment type="catalytic activity">
    <reaction>
        <text>a plastoquinone + NADPH + (n+1) H(+)(in) = a plastoquinol + NADP(+) + n H(+)(out)</text>
        <dbReference type="Rhea" id="RHEA:42612"/>
        <dbReference type="Rhea" id="RHEA-COMP:9561"/>
        <dbReference type="Rhea" id="RHEA-COMP:9562"/>
        <dbReference type="ChEBI" id="CHEBI:15378"/>
        <dbReference type="ChEBI" id="CHEBI:17757"/>
        <dbReference type="ChEBI" id="CHEBI:57783"/>
        <dbReference type="ChEBI" id="CHEBI:58349"/>
        <dbReference type="ChEBI" id="CHEBI:62192"/>
    </reaction>
</comment>
<comment type="subunit">
    <text evidence="1">NDH is composed of at least 16 different subunits, 5 of which are encoded in the nucleus.</text>
</comment>
<comment type="subcellular location">
    <subcellularLocation>
        <location evidence="1">Plastid</location>
        <location evidence="1">Chloroplast thylakoid membrane</location>
        <topology evidence="1">Multi-pass membrane protein</topology>
    </subcellularLocation>
</comment>
<comment type="similarity">
    <text evidence="3">Belongs to the complex I subunit 6 family.</text>
</comment>
<sequence>MDLPGPIHDVLLVFLGSGLILGGLGVVLLTNPIYSAFSLGLVLVCISLFYILSNSYFVAAAQLLIYVGAVNVLIIFAVMFMNGSDYSNDFYLWTVGDGVTSLVCTSILFSLITTILDTSWYGIIWNTGSNQIVEQDLTSNVQQIGIHLSTDFYLPFELVSIILLVALIGAITMARQY</sequence>
<accession>Q3V4Y1</accession>
<protein>
    <recommendedName>
        <fullName>NAD(P)H-quinone oxidoreductase subunit 6, chloroplastic</fullName>
        <ecNumber>7.1.1.-</ecNumber>
    </recommendedName>
    <alternativeName>
        <fullName>NAD(P)H dehydrogenase subunit 6</fullName>
    </alternativeName>
    <alternativeName>
        <fullName>NADH-plastoquinone oxidoreductase subunit 6</fullName>
    </alternativeName>
</protein>
<keyword id="KW-0150">Chloroplast</keyword>
<keyword id="KW-0472">Membrane</keyword>
<keyword id="KW-0520">NAD</keyword>
<keyword id="KW-0521">NADP</keyword>
<keyword id="KW-0934">Plastid</keyword>
<keyword id="KW-0618">Plastoquinone</keyword>
<keyword id="KW-0874">Quinone</keyword>
<keyword id="KW-0793">Thylakoid</keyword>
<keyword id="KW-1278">Translocase</keyword>
<keyword id="KW-0812">Transmembrane</keyword>
<keyword id="KW-1133">Transmembrane helix</keyword>
<keyword id="KW-0813">Transport</keyword>